<evidence type="ECO:0000250" key="1"/>
<evidence type="ECO:0000255" key="2"/>
<evidence type="ECO:0000305" key="3"/>
<dbReference type="EMBL" id="KN275957">
    <property type="protein sequence ID" value="EEH43738.1"/>
    <property type="molecule type" value="Genomic_DNA"/>
</dbReference>
<dbReference type="RefSeq" id="XP_010756170.1">
    <property type="nucleotide sequence ID" value="XM_010757868.1"/>
</dbReference>
<dbReference type="SMR" id="C1FZI7"/>
<dbReference type="FunCoup" id="C1FZI7">
    <property type="interactions" value="174"/>
</dbReference>
<dbReference type="STRING" id="502780.C1FZI7"/>
<dbReference type="GlyCosmos" id="C1FZI7">
    <property type="glycosylation" value="4 sites, No reported glycans"/>
</dbReference>
<dbReference type="GeneID" id="22579932"/>
<dbReference type="KEGG" id="pbn:PADG_00027"/>
<dbReference type="VEuPathDB" id="FungiDB:PADG_00027"/>
<dbReference type="eggNOG" id="KOG3511">
    <property type="taxonomic scope" value="Eukaryota"/>
</dbReference>
<dbReference type="HOGENOM" id="CLU_000700_0_0_1"/>
<dbReference type="InParanoid" id="C1FZI7"/>
<dbReference type="OMA" id="ATMSEFI"/>
<dbReference type="OrthoDB" id="11270at33183"/>
<dbReference type="Proteomes" id="UP000001628">
    <property type="component" value="Unassembled WGS sequence"/>
</dbReference>
<dbReference type="GO" id="GO:0005829">
    <property type="term" value="C:cytosol"/>
    <property type="evidence" value="ECO:0007669"/>
    <property type="project" value="GOC"/>
</dbReference>
<dbReference type="GO" id="GO:0005794">
    <property type="term" value="C:Golgi apparatus"/>
    <property type="evidence" value="ECO:0007669"/>
    <property type="project" value="UniProtKB-SubCell"/>
</dbReference>
<dbReference type="GO" id="GO:0016020">
    <property type="term" value="C:membrane"/>
    <property type="evidence" value="ECO:0007669"/>
    <property type="project" value="UniProtKB-KW"/>
</dbReference>
<dbReference type="GO" id="GO:0006895">
    <property type="term" value="P:Golgi to endosome transport"/>
    <property type="evidence" value="ECO:0007669"/>
    <property type="project" value="TreeGrafter"/>
</dbReference>
<dbReference type="GO" id="GO:0006896">
    <property type="term" value="P:Golgi to vacuole transport"/>
    <property type="evidence" value="ECO:0007669"/>
    <property type="project" value="TreeGrafter"/>
</dbReference>
<dbReference type="GO" id="GO:0006623">
    <property type="term" value="P:protein targeting to vacuole"/>
    <property type="evidence" value="ECO:0007669"/>
    <property type="project" value="TreeGrafter"/>
</dbReference>
<dbReference type="CDD" id="cd15482">
    <property type="entry name" value="Sialidase_non-viral"/>
    <property type="match status" value="1"/>
</dbReference>
<dbReference type="FunFam" id="3.30.60.270:FF:000005">
    <property type="entry name" value="Sortilin"/>
    <property type="match status" value="2"/>
</dbReference>
<dbReference type="FunFam" id="2.10.70.80:FF:000001">
    <property type="entry name" value="Sortilin-related VPS10 domain-containing receptor 1"/>
    <property type="match status" value="1"/>
</dbReference>
<dbReference type="Gene3D" id="2.10.70.80">
    <property type="match status" value="2"/>
</dbReference>
<dbReference type="Gene3D" id="3.30.60.270">
    <property type="match status" value="2"/>
</dbReference>
<dbReference type="Gene3D" id="2.130.10.10">
    <property type="entry name" value="YVTN repeat-like/Quinoprotein amine dehydrogenase"/>
    <property type="match status" value="2"/>
</dbReference>
<dbReference type="InterPro" id="IPR031777">
    <property type="entry name" value="Sortilin_C"/>
</dbReference>
<dbReference type="InterPro" id="IPR031778">
    <property type="entry name" value="Sortilin_N"/>
</dbReference>
<dbReference type="InterPro" id="IPR006581">
    <property type="entry name" value="VPS10"/>
</dbReference>
<dbReference type="InterPro" id="IPR050310">
    <property type="entry name" value="VPS10-sortilin"/>
</dbReference>
<dbReference type="InterPro" id="IPR015943">
    <property type="entry name" value="WD40/YVTN_repeat-like_dom_sf"/>
</dbReference>
<dbReference type="PANTHER" id="PTHR12106">
    <property type="entry name" value="SORTILIN RELATED"/>
    <property type="match status" value="1"/>
</dbReference>
<dbReference type="PANTHER" id="PTHR12106:SF27">
    <property type="entry name" value="SORTILIN-RELATED RECEPTOR"/>
    <property type="match status" value="1"/>
</dbReference>
<dbReference type="Pfam" id="PF15902">
    <property type="entry name" value="Sortilin-Vps10"/>
    <property type="match status" value="2"/>
</dbReference>
<dbReference type="Pfam" id="PF15901">
    <property type="entry name" value="Sortilin_C"/>
    <property type="match status" value="2"/>
</dbReference>
<dbReference type="SMART" id="SM00602">
    <property type="entry name" value="VPS10"/>
    <property type="match status" value="2"/>
</dbReference>
<dbReference type="SUPFAM" id="SSF110296">
    <property type="entry name" value="Oligoxyloglucan reducing end-specific cellobiohydrolase"/>
    <property type="match status" value="2"/>
</dbReference>
<gene>
    <name type="primary">VPS10</name>
    <name type="ORF">PADG_00027</name>
</gene>
<comment type="function">
    <text evidence="1">Functions as a sorting receptor in the Golgi compartment required for the intracellular sorting and delivery of soluble vacuolar proteins, like carboxypeptidase Y (CPY) and proteinase A. Executes multiple rounds of sorting by cycling between the late Golgi and a prevacuolar endosome-like compartment (By similarity).</text>
</comment>
<comment type="subcellular location">
    <subcellularLocation>
        <location evidence="1">Golgi apparatus</location>
        <location evidence="1">trans-Golgi network membrane</location>
        <topology evidence="1">Multi-pass membrane protein</topology>
    </subcellularLocation>
    <subcellularLocation>
        <location evidence="1">Prevacuolar compartment membrane</location>
        <topology evidence="1">Multi-pass membrane protein</topology>
    </subcellularLocation>
    <text evidence="1">Cycles between the Golgi apparatus and the prevacuolar compartment.</text>
</comment>
<comment type="similarity">
    <text evidence="3">Belongs to the VPS10-related sortilin family.</text>
</comment>
<proteinExistence type="inferred from homology"/>
<organism>
    <name type="scientific">Paracoccidioides brasiliensis (strain Pb18)</name>
    <dbReference type="NCBI Taxonomy" id="502780"/>
    <lineage>
        <taxon>Eukaryota</taxon>
        <taxon>Fungi</taxon>
        <taxon>Dikarya</taxon>
        <taxon>Ascomycota</taxon>
        <taxon>Pezizomycotina</taxon>
        <taxon>Eurotiomycetes</taxon>
        <taxon>Eurotiomycetidae</taxon>
        <taxon>Onygenales</taxon>
        <taxon>Ajellomycetaceae</taxon>
        <taxon>Paracoccidioides</taxon>
    </lineage>
</organism>
<accession>C1FZI7</accession>
<name>VPS10_PARBD</name>
<keyword id="KW-0325">Glycoprotein</keyword>
<keyword id="KW-0333">Golgi apparatus</keyword>
<keyword id="KW-0472">Membrane</keyword>
<keyword id="KW-0653">Protein transport</keyword>
<keyword id="KW-0675">Receptor</keyword>
<keyword id="KW-1185">Reference proteome</keyword>
<keyword id="KW-0677">Repeat</keyword>
<keyword id="KW-0732">Signal</keyword>
<keyword id="KW-0812">Transmembrane</keyword>
<keyword id="KW-1133">Transmembrane helix</keyword>
<keyword id="KW-0813">Transport</keyword>
<feature type="signal peptide" evidence="2">
    <location>
        <begin position="1"/>
        <end position="21"/>
    </location>
</feature>
<feature type="chain" id="PRO_0000407528" description="Vacuolar protein sorting/targeting protein 10">
    <location>
        <begin position="22"/>
        <end position="1496"/>
    </location>
</feature>
<feature type="topological domain" description="Lumenal" evidence="2">
    <location>
        <begin position="22"/>
        <end position="1362"/>
    </location>
</feature>
<feature type="transmembrane region" description="Helical" evidence="2">
    <location>
        <begin position="1363"/>
        <end position="1383"/>
    </location>
</feature>
<feature type="topological domain" description="Cytoplasmic" evidence="2">
    <location>
        <begin position="1384"/>
        <end position="1409"/>
    </location>
</feature>
<feature type="transmembrane region" description="Helical" evidence="2">
    <location>
        <begin position="1410"/>
        <end position="1430"/>
    </location>
</feature>
<feature type="topological domain" description="Lumenal" evidence="2">
    <location>
        <begin position="1431"/>
        <end position="1496"/>
    </location>
</feature>
<feature type="repeat" description="BNR 1">
    <location>
        <begin position="61"/>
        <end position="71"/>
    </location>
</feature>
<feature type="repeat" description="BNR 2">
    <location>
        <begin position="377"/>
        <end position="387"/>
    </location>
</feature>
<feature type="repeat" description="BNR 3">
    <location>
        <begin position="438"/>
        <end position="448"/>
    </location>
</feature>
<feature type="repeat" description="BNR 4">
    <location>
        <begin position="480"/>
        <end position="489"/>
    </location>
</feature>
<feature type="repeat" description="BNR 5">
    <location>
        <begin position="722"/>
        <end position="732"/>
    </location>
</feature>
<feature type="repeat" description="BNR 6">
    <location>
        <begin position="819"/>
        <end position="829"/>
    </location>
</feature>
<feature type="repeat" description="BNR 7">
    <location>
        <begin position="1106"/>
        <end position="1116"/>
    </location>
</feature>
<feature type="repeat" description="BNR 8">
    <location>
        <begin position="1148"/>
        <end position="1157"/>
    </location>
</feature>
<feature type="glycosylation site" description="N-linked (GlcNAc...) asparagine" evidence="2">
    <location>
        <position position="190"/>
    </location>
</feature>
<feature type="glycosylation site" description="N-linked (GlcNAc...) asparagine" evidence="2">
    <location>
        <position position="297"/>
    </location>
</feature>
<feature type="glycosylation site" description="N-linked (GlcNAc...) asparagine" evidence="2">
    <location>
        <position position="322"/>
    </location>
</feature>
<feature type="glycosylation site" description="N-linked (GlcNAc...) asparagine" evidence="2">
    <location>
        <position position="971"/>
    </location>
</feature>
<reference key="1">
    <citation type="journal article" date="2011" name="PLoS Genet.">
        <title>Comparative genomic analysis of human fungal pathogens causing paracoccidioidomycosis.</title>
        <authorList>
            <person name="Desjardins C.A."/>
            <person name="Champion M.D."/>
            <person name="Holder J.W."/>
            <person name="Muszewska A."/>
            <person name="Goldberg J."/>
            <person name="Bailao A.M."/>
            <person name="Brigido M.M."/>
            <person name="Ferreira M.E."/>
            <person name="Garcia A.M."/>
            <person name="Grynberg M."/>
            <person name="Gujja S."/>
            <person name="Heiman D.I."/>
            <person name="Henn M.R."/>
            <person name="Kodira C.D."/>
            <person name="Leon-Narvaez H."/>
            <person name="Longo L.V.G."/>
            <person name="Ma L.-J."/>
            <person name="Malavazi I."/>
            <person name="Matsuo A.L."/>
            <person name="Morais F.V."/>
            <person name="Pereira M."/>
            <person name="Rodriguez-Brito S."/>
            <person name="Sakthikumar S."/>
            <person name="Salem-Izacc S.M."/>
            <person name="Sykes S.M."/>
            <person name="Teixeira M.M."/>
            <person name="Vallejo M.C."/>
            <person name="Walter M.E."/>
            <person name="Yandava C."/>
            <person name="Young S."/>
            <person name="Zeng Q."/>
            <person name="Zucker J."/>
            <person name="Felipe M.S."/>
            <person name="Goldman G.H."/>
            <person name="Haas B.J."/>
            <person name="McEwen J.G."/>
            <person name="Nino-Vega G."/>
            <person name="Puccia R."/>
            <person name="San-Blas G."/>
            <person name="Soares C.M."/>
            <person name="Birren B.W."/>
            <person name="Cuomo C.A."/>
        </authorList>
    </citation>
    <scope>NUCLEOTIDE SEQUENCE [LARGE SCALE GENOMIC DNA]</scope>
    <source>
        <strain>Pb18</strain>
    </source>
</reference>
<protein>
    <recommendedName>
        <fullName>Vacuolar protein sorting/targeting protein 10</fullName>
    </recommendedName>
    <alternativeName>
        <fullName>Carboxypeptidase Y receptor</fullName>
        <shortName>CPY receptor</shortName>
    </alternativeName>
    <alternativeName>
        <fullName>Sortilin VPS10</fullName>
    </alternativeName>
    <alternativeName>
        <fullName>Vacuolar carboxypeptidase sorting receptor VPS10</fullName>
    </alternativeName>
</protein>
<sequence>MILRRLVLAGSLLLATAFTSAKKADSPIIMATRFDHEPINLFYFGDSDVVMLQDIKNGDVYVSRDAGVKWDMVNLDGLKGQALSLWSHPTDRTKAYILGKAGKHWVTNDQAVSWHEFSADVEFFQSLFPLVFHGKDSDRVLLQGHKCVGRDCKEVTYYTTDGFKTVDILIENARGCNWAVSTPIFGDGLNLSKEVNDRIFCIVPGLQSPWSDYNRLLYSDRFFKQDSGTEAPLDSGRAVSGVVRTASVKKYLLAAAKSARTSELALYVTDDGSQWHRAEFDGQRVEEDAYTVLESTNYSIQIDVVAETPSAPMGTLFTSNSNGTYFTRNIDHTNRNGLGFVDFEKIATIQGIILVNTVKNWEDVEMSALVEKKIISQISFDDGRTFQPLKAGKHDLHLHSVTHLSNSGRVFSSPAPGLVMGVGNTGGHLKDYYDGDLYVSDDAGITWRKALDEAHKYEFGDQGSVIVAVFDEGRTGKISYSLNHGKDWKEASLPDGIKIRARILTTMPDSTGLKFLLVGSSKRDSDVEHYVISISFTDMEERTCGKDDFETWPARLNEKNEPDCLMGHKQFYQRRKADVDCFIKKKFQEPVPQFEPCKCTVEDFECDFNFIRSTEGKSCVPARSLPVPEGACKKPNDKYMGSSGFRLIPGNACIREGGVELDKQIERVCTDTLTVPVSGEIVVQKTFFTADNYKGYFYLERKDSSKGDDETVIMITSELQIYITRDHGKNWKEIFPGETITRIVPHQYFDDVAYFLTNSGDGWYTLDRGENFRKFKAPIPPNQDKLPVLSFHPERRDWLIWTGAEECKTRGPQCHSVAYYSTNHGSEWHFLMQYVRRCEFIKREARGSSNNLVFCEQFENENPLNHHLQLLSTDDWFSEKKVHYNNILDFATMQEFIIVAVRGEKPEDSLSVGVSVDGETFAYADLPANVQIPVQRAYTVLESRTHAAFLHVTVNNVEDHEYGSIIKSNSNGTSYVLSLSAVNRNTYGYADFEKMQGMEGVAMANVVGNVADVEKGAAKKYRTMITHNDGAEWALLSPPSKDSEGRDYSCSTEGGKPTDKCALHLHSYTERADPRDTYSSPSAIGVMLGTGNVGEYLTLKSDADTFITRDGGITWQEVRKDRYQWEFGDSGSIIVIVPESRPTKTLLYSLDEGKSWKEFQFTEVEMLIRDISTVPSDTSRNFLLWGNEVGNGKKPGVAAVNIDFSNLKERHKQCVLNEEKPEADDYYLWEPMHPFQPNGCLFGHRAKYHRKRPDRDCFIGRELQHLDSIGDICECTRSDYECDYNYEPQIDGTCAPVPGLKPLDPKLICTEDPKAVEWYEPTGYRRIPLTKCEGGKQLHHIIPHACPNKEEEFLKKHPGLRGVGLFFVIMSPIGLAAAIGYYVYTRWDGKFGRIRLGDTGSGGFFASDSLLISIPVAIVAGVVAVATALPLLASSLWRSVRGYARVPGGSSSQRVYSSRAAFAAQRADYVGVVDDEDELLGAEDFDEEENDDRGQV</sequence>